<accession>Q96GP6</accession>
<accession>E5RFB8</accession>
<accession>Q58A83</accession>
<accession>Q8IXF3</accession>
<accession>Q9BW74</accession>
<gene>
    <name type="primary">SCARF2</name>
    <name type="synonym">SREC2</name>
    <name type="synonym">SREPCR</name>
</gene>
<name>SREC2_HUMAN</name>
<reference key="1">
    <citation type="submission" date="2000-12" db="EMBL/GenBank/DDBJ databases">
        <title>cDNA cloning of SRECRP (scavenger receptor expressed by endothelial cell related protein).</title>
        <authorList>
            <person name="Adachi H."/>
            <person name="Tsujimoto M."/>
        </authorList>
    </citation>
    <scope>NUCLEOTIDE SEQUENCE [MRNA] (ISOFORM 2)</scope>
    <scope>VARIANT SER-174</scope>
</reference>
<reference key="2">
    <citation type="journal article" date="2002" name="J. Biol. Chem.">
        <title>SREC-II, a new member of the scavenger receptor type F family, trans-interacts with SREC-I through its extracellular domain.</title>
        <authorList>
            <person name="Ishii J."/>
            <person name="Adachi H."/>
            <person name="Aoki J."/>
            <person name="Koizumi H."/>
            <person name="Tomita S."/>
            <person name="Suzuki T."/>
            <person name="Tsujimoto M."/>
            <person name="Inoue K."/>
            <person name="Arai H."/>
        </authorList>
    </citation>
    <scope>NUCLEOTIDE SEQUENCE [MRNA] (ISOFORM 1)</scope>
    <scope>TISSUE SPECIFICITY</scope>
    <scope>VARIANTS ASP-778 AND VAL-779</scope>
    <source>
        <tissue>Epithelium</tissue>
    </source>
</reference>
<reference key="3">
    <citation type="submission" date="1999-03" db="EMBL/GenBank/DDBJ databases">
        <title>A novel human nurse cell receptor NSR1.</title>
        <authorList>
            <person name="Kitaura M."/>
            <person name="Iwagami S."/>
            <person name="Tsuruta Y."/>
            <person name="Suzuki R."/>
        </authorList>
    </citation>
    <scope>NUCLEOTIDE SEQUENCE [MRNA] (ISOFORM 2)</scope>
    <source>
        <tissue>Vulva</tissue>
    </source>
</reference>
<reference key="4">
    <citation type="journal article" date="1999" name="Nature">
        <title>The DNA sequence of human chromosome 22.</title>
        <authorList>
            <person name="Dunham I."/>
            <person name="Hunt A.R."/>
            <person name="Collins J.E."/>
            <person name="Bruskiewich R."/>
            <person name="Beare D.M."/>
            <person name="Clamp M."/>
            <person name="Smink L.J."/>
            <person name="Ainscough R."/>
            <person name="Almeida J.P."/>
            <person name="Babbage A.K."/>
            <person name="Bagguley C."/>
            <person name="Bailey J."/>
            <person name="Barlow K.F."/>
            <person name="Bates K.N."/>
            <person name="Beasley O.P."/>
            <person name="Bird C.P."/>
            <person name="Blakey S.E."/>
            <person name="Bridgeman A.M."/>
            <person name="Buck D."/>
            <person name="Burgess J."/>
            <person name="Burrill W.D."/>
            <person name="Burton J."/>
            <person name="Carder C."/>
            <person name="Carter N.P."/>
            <person name="Chen Y."/>
            <person name="Clark G."/>
            <person name="Clegg S.M."/>
            <person name="Cobley V.E."/>
            <person name="Cole C.G."/>
            <person name="Collier R.E."/>
            <person name="Connor R."/>
            <person name="Conroy D."/>
            <person name="Corby N.R."/>
            <person name="Coville G.J."/>
            <person name="Cox A.V."/>
            <person name="Davis J."/>
            <person name="Dawson E."/>
            <person name="Dhami P.D."/>
            <person name="Dockree C."/>
            <person name="Dodsworth S.J."/>
            <person name="Durbin R.M."/>
            <person name="Ellington A.G."/>
            <person name="Evans K.L."/>
            <person name="Fey J.M."/>
            <person name="Fleming K."/>
            <person name="French L."/>
            <person name="Garner A.A."/>
            <person name="Gilbert J.G.R."/>
            <person name="Goward M.E."/>
            <person name="Grafham D.V."/>
            <person name="Griffiths M.N.D."/>
            <person name="Hall C."/>
            <person name="Hall R.E."/>
            <person name="Hall-Tamlyn G."/>
            <person name="Heathcott R.W."/>
            <person name="Ho S."/>
            <person name="Holmes S."/>
            <person name="Hunt S.E."/>
            <person name="Jones M.C."/>
            <person name="Kershaw J."/>
            <person name="Kimberley A.M."/>
            <person name="King A."/>
            <person name="Laird G.K."/>
            <person name="Langford C.F."/>
            <person name="Leversha M.A."/>
            <person name="Lloyd C."/>
            <person name="Lloyd D.M."/>
            <person name="Martyn I.D."/>
            <person name="Mashreghi-Mohammadi M."/>
            <person name="Matthews L.H."/>
            <person name="Mccann O.T."/>
            <person name="Mcclay J."/>
            <person name="Mclaren S."/>
            <person name="McMurray A.A."/>
            <person name="Milne S.A."/>
            <person name="Mortimore B.J."/>
            <person name="Odell C.N."/>
            <person name="Pavitt R."/>
            <person name="Pearce A.V."/>
            <person name="Pearson D."/>
            <person name="Phillimore B.J.C.T."/>
            <person name="Phillips S.H."/>
            <person name="Plumb R.W."/>
            <person name="Ramsay H."/>
            <person name="Ramsey Y."/>
            <person name="Rogers L."/>
            <person name="Ross M.T."/>
            <person name="Scott C.E."/>
            <person name="Sehra H.K."/>
            <person name="Skuce C.D."/>
            <person name="Smalley S."/>
            <person name="Smith M.L."/>
            <person name="Soderlund C."/>
            <person name="Spragon L."/>
            <person name="Steward C.A."/>
            <person name="Sulston J.E."/>
            <person name="Swann R.M."/>
            <person name="Vaudin M."/>
            <person name="Wall M."/>
            <person name="Wallis J.M."/>
            <person name="Whiteley M.N."/>
            <person name="Willey D.L."/>
            <person name="Williams L."/>
            <person name="Williams S.A."/>
            <person name="Williamson H."/>
            <person name="Wilmer T.E."/>
            <person name="Wilming L."/>
            <person name="Wright C.L."/>
            <person name="Hubbard T."/>
            <person name="Bentley D.R."/>
            <person name="Beck S."/>
            <person name="Rogers J."/>
            <person name="Shimizu N."/>
            <person name="Minoshima S."/>
            <person name="Kawasaki K."/>
            <person name="Sasaki T."/>
            <person name="Asakawa S."/>
            <person name="Kudoh J."/>
            <person name="Shintani A."/>
            <person name="Shibuya K."/>
            <person name="Yoshizaki Y."/>
            <person name="Aoki N."/>
            <person name="Mitsuyama S."/>
            <person name="Roe B.A."/>
            <person name="Chen F."/>
            <person name="Chu L."/>
            <person name="Crabtree J."/>
            <person name="Deschamps S."/>
            <person name="Do A."/>
            <person name="Do T."/>
            <person name="Dorman A."/>
            <person name="Fang F."/>
            <person name="Fu Y."/>
            <person name="Hu P."/>
            <person name="Hua A."/>
            <person name="Kenton S."/>
            <person name="Lai H."/>
            <person name="Lao H.I."/>
            <person name="Lewis J."/>
            <person name="Lewis S."/>
            <person name="Lin S.-P."/>
            <person name="Loh P."/>
            <person name="Malaj E."/>
            <person name="Nguyen T."/>
            <person name="Pan H."/>
            <person name="Phan S."/>
            <person name="Qi S."/>
            <person name="Qian Y."/>
            <person name="Ray L."/>
            <person name="Ren Q."/>
            <person name="Shaull S."/>
            <person name="Sloan D."/>
            <person name="Song L."/>
            <person name="Wang Q."/>
            <person name="Wang Y."/>
            <person name="Wang Z."/>
            <person name="White J."/>
            <person name="Willingham D."/>
            <person name="Wu H."/>
            <person name="Yao Z."/>
            <person name="Zhan M."/>
            <person name="Zhang G."/>
            <person name="Chissoe S."/>
            <person name="Murray J."/>
            <person name="Miller N."/>
            <person name="Minx P."/>
            <person name="Fulton R."/>
            <person name="Johnson D."/>
            <person name="Bemis G."/>
            <person name="Bentley D."/>
            <person name="Bradshaw H."/>
            <person name="Bourne S."/>
            <person name="Cordes M."/>
            <person name="Du Z."/>
            <person name="Fulton L."/>
            <person name="Goela D."/>
            <person name="Graves T."/>
            <person name="Hawkins J."/>
            <person name="Hinds K."/>
            <person name="Kemp K."/>
            <person name="Latreille P."/>
            <person name="Layman D."/>
            <person name="Ozersky P."/>
            <person name="Rohlfing T."/>
            <person name="Scheet P."/>
            <person name="Walker C."/>
            <person name="Wamsley A."/>
            <person name="Wohldmann P."/>
            <person name="Pepin K."/>
            <person name="Nelson J."/>
            <person name="Korf I."/>
            <person name="Bedell J.A."/>
            <person name="Hillier L.W."/>
            <person name="Mardis E."/>
            <person name="Waterston R."/>
            <person name="Wilson R."/>
            <person name="Emanuel B.S."/>
            <person name="Shaikh T."/>
            <person name="Kurahashi H."/>
            <person name="Saitta S."/>
            <person name="Budarf M.L."/>
            <person name="McDermid H.E."/>
            <person name="Johnson A."/>
            <person name="Wong A.C.C."/>
            <person name="Morrow B.E."/>
            <person name="Edelmann L."/>
            <person name="Kim U.J."/>
            <person name="Shizuya H."/>
            <person name="Simon M.I."/>
            <person name="Dumanski J.P."/>
            <person name="Peyrard M."/>
            <person name="Kedra D."/>
            <person name="Seroussi E."/>
            <person name="Fransson I."/>
            <person name="Tapia I."/>
            <person name="Bruder C.E."/>
            <person name="O'Brien K.P."/>
            <person name="Wilkinson P."/>
            <person name="Bodenteich A."/>
            <person name="Hartman K."/>
            <person name="Hu X."/>
            <person name="Khan A.S."/>
            <person name="Lane L."/>
            <person name="Tilahun Y."/>
            <person name="Wright H."/>
        </authorList>
    </citation>
    <scope>NUCLEOTIDE SEQUENCE [LARGE SCALE GENOMIC DNA]</scope>
</reference>
<reference key="5">
    <citation type="submission" date="2005-09" db="EMBL/GenBank/DDBJ databases">
        <authorList>
            <person name="Mural R.J."/>
            <person name="Istrail S."/>
            <person name="Sutton G.G."/>
            <person name="Florea L."/>
            <person name="Halpern A.L."/>
            <person name="Mobarry C.M."/>
            <person name="Lippert R."/>
            <person name="Walenz B."/>
            <person name="Shatkay H."/>
            <person name="Dew I."/>
            <person name="Miller J.R."/>
            <person name="Flanigan M.J."/>
            <person name="Edwards N.J."/>
            <person name="Bolanos R."/>
            <person name="Fasulo D."/>
            <person name="Halldorsson B.V."/>
            <person name="Hannenhalli S."/>
            <person name="Turner R."/>
            <person name="Yooseph S."/>
            <person name="Lu F."/>
            <person name="Nusskern D.R."/>
            <person name="Shue B.C."/>
            <person name="Zheng X.H."/>
            <person name="Zhong F."/>
            <person name="Delcher A.L."/>
            <person name="Huson D.H."/>
            <person name="Kravitz S.A."/>
            <person name="Mouchard L."/>
            <person name="Reinert K."/>
            <person name="Remington K.A."/>
            <person name="Clark A.G."/>
            <person name="Waterman M.S."/>
            <person name="Eichler E.E."/>
            <person name="Adams M.D."/>
            <person name="Hunkapiller M.W."/>
            <person name="Myers E.W."/>
            <person name="Venter J.C."/>
        </authorList>
    </citation>
    <scope>NUCLEOTIDE SEQUENCE [LARGE SCALE GENOMIC DNA]</scope>
</reference>
<reference key="6">
    <citation type="journal article" date="2004" name="Genome Res.">
        <title>The status, quality, and expansion of the NIH full-length cDNA project: the Mammalian Gene Collection (MGC).</title>
        <authorList>
            <consortium name="The MGC Project Team"/>
        </authorList>
    </citation>
    <scope>NUCLEOTIDE SEQUENCE [LARGE SCALE MRNA] OF 272-871 (ISOFORM 2)</scope>
    <source>
        <tissue>Brain</tissue>
    </source>
</reference>
<reference key="7">
    <citation type="journal article" date="2009" name="Anal. Chem.">
        <title>Lys-N and trypsin cover complementary parts of the phosphoproteome in a refined SCX-based approach.</title>
        <authorList>
            <person name="Gauci S."/>
            <person name="Helbig A.O."/>
            <person name="Slijper M."/>
            <person name="Krijgsveld J."/>
            <person name="Heck A.J."/>
            <person name="Mohammed S."/>
        </authorList>
    </citation>
    <scope>IDENTIFICATION BY MASS SPECTROMETRY [LARGE SCALE ANALYSIS]</scope>
</reference>
<reference key="8">
    <citation type="journal article" date="2011" name="Sci. Signal.">
        <title>System-wide temporal characterization of the proteome and phosphoproteome of human embryonic stem cell differentiation.</title>
        <authorList>
            <person name="Rigbolt K.T."/>
            <person name="Prokhorova T.A."/>
            <person name="Akimov V."/>
            <person name="Henningsen J."/>
            <person name="Johansen P.T."/>
            <person name="Kratchmarova I."/>
            <person name="Kassem M."/>
            <person name="Mann M."/>
            <person name="Olsen J.V."/>
            <person name="Blagoev B."/>
        </authorList>
    </citation>
    <scope>PHOSPHORYLATION [LARGE SCALE ANALYSIS] AT SER-651; SER-653 AND SER-718</scope>
    <scope>IDENTIFICATION BY MASS SPECTROMETRY [LARGE SCALE ANALYSIS]</scope>
</reference>
<reference key="9">
    <citation type="journal article" date="2014" name="J. Proteomics">
        <title>An enzyme assisted RP-RPLC approach for in-depth analysis of human liver phosphoproteome.</title>
        <authorList>
            <person name="Bian Y."/>
            <person name="Song C."/>
            <person name="Cheng K."/>
            <person name="Dong M."/>
            <person name="Wang F."/>
            <person name="Huang J."/>
            <person name="Sun D."/>
            <person name="Wang L."/>
            <person name="Ye M."/>
            <person name="Zou H."/>
        </authorList>
    </citation>
    <scope>PHOSPHORYLATION [LARGE SCALE ANALYSIS] AT SER-613; SER-653 AND SER-742</scope>
    <scope>IDENTIFICATION BY MASS SPECTROMETRY [LARGE SCALE ANALYSIS]</scope>
    <source>
        <tissue>Liver</tissue>
    </source>
</reference>
<reference key="10">
    <citation type="journal article" date="2006" name="Science">
        <title>The consensus coding sequences of human breast and colorectal cancers.</title>
        <authorList>
            <person name="Sjoeblom T."/>
            <person name="Jones S."/>
            <person name="Wood L.D."/>
            <person name="Parsons D.W."/>
            <person name="Lin J."/>
            <person name="Barber T.D."/>
            <person name="Mandelker D."/>
            <person name="Leary R.J."/>
            <person name="Ptak J."/>
            <person name="Silliman N."/>
            <person name="Szabo S."/>
            <person name="Buckhaults P."/>
            <person name="Farrell C."/>
            <person name="Meeh P."/>
            <person name="Markowitz S.D."/>
            <person name="Willis J."/>
            <person name="Dawson D."/>
            <person name="Willson J.K.V."/>
            <person name="Gazdar A.F."/>
            <person name="Hartigan J."/>
            <person name="Wu L."/>
            <person name="Liu C."/>
            <person name="Parmigiani G."/>
            <person name="Park B.H."/>
            <person name="Bachman K.E."/>
            <person name="Papadopoulos N."/>
            <person name="Vogelstein B."/>
            <person name="Kinzler K.W."/>
            <person name="Velculescu V.E."/>
        </authorList>
    </citation>
    <scope>VARIANT [LARGE SCALE ANALYSIS] CYS-499</scope>
</reference>
<reference key="11">
    <citation type="journal article" date="2010" name="Am. J. Hum. Genet.">
        <title>Mutations in SCARF2 are responsible for Van Den Ende-Gupta syndrome.</title>
        <authorList>
            <person name="Anastasio N."/>
            <person name="Ben-Omran T."/>
            <person name="Teebi A."/>
            <person name="Ha K.C."/>
            <person name="Lalonde E."/>
            <person name="Ali R."/>
            <person name="Almureikhi M."/>
            <person name="Der Kaloustian V.M."/>
            <person name="Liu J."/>
            <person name="Rosenblatt D.S."/>
            <person name="Majewski J."/>
            <person name="Jerome-Majewska L.A."/>
        </authorList>
    </citation>
    <scope>VARIANT VDEGS TYR-258</scope>
</reference>
<evidence type="ECO:0000250" key="1"/>
<evidence type="ECO:0000250" key="2">
    <source>
        <dbReference type="UniProtKB" id="P59222"/>
    </source>
</evidence>
<evidence type="ECO:0000255" key="3"/>
<evidence type="ECO:0000255" key="4">
    <source>
        <dbReference type="PROSITE-ProRule" id="PRU00076"/>
    </source>
</evidence>
<evidence type="ECO:0000256" key="5">
    <source>
        <dbReference type="SAM" id="MobiDB-lite"/>
    </source>
</evidence>
<evidence type="ECO:0000269" key="6">
    <source>
    </source>
</evidence>
<evidence type="ECO:0000269" key="7">
    <source>
    </source>
</evidence>
<evidence type="ECO:0000269" key="8">
    <source>
    </source>
</evidence>
<evidence type="ECO:0000269" key="9">
    <source ref="1"/>
</evidence>
<evidence type="ECO:0000303" key="10">
    <source>
    </source>
</evidence>
<evidence type="ECO:0000303" key="11">
    <source ref="1"/>
</evidence>
<evidence type="ECO:0000303" key="12">
    <source ref="3"/>
</evidence>
<evidence type="ECO:0000305" key="13"/>
<evidence type="ECO:0007744" key="14">
    <source>
    </source>
</evidence>
<evidence type="ECO:0007744" key="15">
    <source>
    </source>
</evidence>
<organism>
    <name type="scientific">Homo sapiens</name>
    <name type="common">Human</name>
    <dbReference type="NCBI Taxonomy" id="9606"/>
    <lineage>
        <taxon>Eukaryota</taxon>
        <taxon>Metazoa</taxon>
        <taxon>Chordata</taxon>
        <taxon>Craniata</taxon>
        <taxon>Vertebrata</taxon>
        <taxon>Euteleostomi</taxon>
        <taxon>Mammalia</taxon>
        <taxon>Eutheria</taxon>
        <taxon>Euarchontoglires</taxon>
        <taxon>Primates</taxon>
        <taxon>Haplorrhini</taxon>
        <taxon>Catarrhini</taxon>
        <taxon>Hominidae</taxon>
        <taxon>Homo</taxon>
    </lineage>
</organism>
<dbReference type="EMBL" id="AB052951">
    <property type="protein sequence ID" value="BAC53753.1"/>
    <property type="molecule type" value="mRNA"/>
</dbReference>
<dbReference type="EMBL" id="AF522196">
    <property type="protein sequence ID" value="AAN45861.1"/>
    <property type="status" value="ALT_FRAME"/>
    <property type="molecule type" value="mRNA"/>
</dbReference>
<dbReference type="EMBL" id="AB024433">
    <property type="protein sequence ID" value="BAD93345.1"/>
    <property type="molecule type" value="mRNA"/>
</dbReference>
<dbReference type="EMBL" id="AC007731">
    <property type="status" value="NOT_ANNOTATED_CDS"/>
    <property type="molecule type" value="Genomic_DNA"/>
</dbReference>
<dbReference type="EMBL" id="CH471176">
    <property type="protein sequence ID" value="EAX02965.1"/>
    <property type="molecule type" value="Genomic_DNA"/>
</dbReference>
<dbReference type="EMBL" id="BC000584">
    <property type="protein sequence ID" value="AAH00584.2"/>
    <property type="molecule type" value="mRNA"/>
</dbReference>
<dbReference type="EMBL" id="BC009326">
    <property type="protein sequence ID" value="AAH09326.2"/>
    <property type="molecule type" value="mRNA"/>
</dbReference>
<dbReference type="CCDS" id="CCDS13779.2">
    <molecule id="Q96GP6-1"/>
</dbReference>
<dbReference type="CCDS" id="CCDS46666.1">
    <molecule id="Q96GP6-2"/>
</dbReference>
<dbReference type="RefSeq" id="NP_699165.3">
    <molecule id="Q96GP6-1"/>
    <property type="nucleotide sequence ID" value="NM_153334.6"/>
</dbReference>
<dbReference type="RefSeq" id="NP_878315.2">
    <molecule id="Q96GP6-2"/>
    <property type="nucleotide sequence ID" value="NM_182895.5"/>
</dbReference>
<dbReference type="SMR" id="Q96GP6"/>
<dbReference type="BioGRID" id="124803">
    <property type="interactions" value="24"/>
</dbReference>
<dbReference type="FunCoup" id="Q96GP6">
    <property type="interactions" value="173"/>
</dbReference>
<dbReference type="IntAct" id="Q96GP6">
    <property type="interactions" value="15"/>
</dbReference>
<dbReference type="STRING" id="9606.ENSP00000485276"/>
<dbReference type="GlyCosmos" id="Q96GP6">
    <property type="glycosylation" value="4 sites, No reported glycans"/>
</dbReference>
<dbReference type="GlyGen" id="Q96GP6">
    <property type="glycosylation" value="4 sites"/>
</dbReference>
<dbReference type="iPTMnet" id="Q96GP6"/>
<dbReference type="PhosphoSitePlus" id="Q96GP6"/>
<dbReference type="SwissPalm" id="Q96GP6"/>
<dbReference type="BioMuta" id="SCARF2"/>
<dbReference type="DMDM" id="380865486"/>
<dbReference type="jPOST" id="Q96GP6"/>
<dbReference type="MassIVE" id="Q96GP6"/>
<dbReference type="PaxDb" id="9606-ENSP00000477564"/>
<dbReference type="PeptideAtlas" id="Q96GP6"/>
<dbReference type="ProteomicsDB" id="76651">
    <molecule id="Q96GP6-1"/>
</dbReference>
<dbReference type="ProteomicsDB" id="76652">
    <molecule id="Q96GP6-2"/>
</dbReference>
<dbReference type="Pumba" id="Q96GP6"/>
<dbReference type="Antibodypedia" id="51072">
    <property type="antibodies" value="99 antibodies from 23 providers"/>
</dbReference>
<dbReference type="DNASU" id="91179"/>
<dbReference type="Ensembl" id="ENST00000622235.5">
    <molecule id="Q96GP6-2"/>
    <property type="protein sequence ID" value="ENSP00000477564.2"/>
    <property type="gene ID" value="ENSG00000244486.9"/>
</dbReference>
<dbReference type="Ensembl" id="ENST00000623402.1">
    <molecule id="Q96GP6-1"/>
    <property type="protein sequence ID" value="ENSP00000485276.1"/>
    <property type="gene ID" value="ENSG00000244486.9"/>
</dbReference>
<dbReference type="GeneID" id="91179"/>
<dbReference type="KEGG" id="hsa:91179"/>
<dbReference type="MANE-Select" id="ENST00000622235.5">
    <molecule id="Q96GP6-2"/>
    <property type="protein sequence ID" value="ENSP00000477564.2"/>
    <property type="RefSeq nucleotide sequence ID" value="NM_182895.5"/>
    <property type="RefSeq protein sequence ID" value="NP_878315.2"/>
</dbReference>
<dbReference type="UCSC" id="uc062bsr.1">
    <molecule id="Q96GP6-1"/>
    <property type="organism name" value="human"/>
</dbReference>
<dbReference type="AGR" id="HGNC:19869"/>
<dbReference type="CTD" id="91179"/>
<dbReference type="DisGeNET" id="91179"/>
<dbReference type="GeneCards" id="SCARF2"/>
<dbReference type="HGNC" id="HGNC:19869">
    <property type="gene designation" value="SCARF2"/>
</dbReference>
<dbReference type="HPA" id="ENSG00000244486">
    <property type="expression patterns" value="Low tissue specificity"/>
</dbReference>
<dbReference type="MalaCards" id="SCARF2"/>
<dbReference type="MIM" id="600920">
    <property type="type" value="phenotype"/>
</dbReference>
<dbReference type="MIM" id="613619">
    <property type="type" value="gene"/>
</dbReference>
<dbReference type="neXtProt" id="NX_Q96GP6"/>
<dbReference type="OpenTargets" id="ENSG00000244486"/>
<dbReference type="Orphanet" id="2460">
    <property type="disease" value="Van den Ende-Gupta syndrome"/>
</dbReference>
<dbReference type="PharmGKB" id="PA134908523"/>
<dbReference type="VEuPathDB" id="HostDB:ENSG00000244486"/>
<dbReference type="eggNOG" id="KOG1218">
    <property type="taxonomic scope" value="Eukaryota"/>
</dbReference>
<dbReference type="GeneTree" id="ENSGT00950000183101"/>
<dbReference type="HOGENOM" id="CLU_017821_1_0_1"/>
<dbReference type="InParanoid" id="Q96GP6"/>
<dbReference type="OMA" id="ITCERGW"/>
<dbReference type="OrthoDB" id="6130531at2759"/>
<dbReference type="PAN-GO" id="Q96GP6">
    <property type="GO annotations" value="0 GO annotations based on evolutionary models"/>
</dbReference>
<dbReference type="PhylomeDB" id="Q96GP6"/>
<dbReference type="TreeFam" id="TF332598"/>
<dbReference type="PathwayCommons" id="Q96GP6"/>
<dbReference type="SignaLink" id="Q96GP6"/>
<dbReference type="BioGRID-ORCS" id="91179">
    <property type="hits" value="43 hits in 1146 CRISPR screens"/>
</dbReference>
<dbReference type="ChiTaRS" id="SCARF2">
    <property type="organism name" value="human"/>
</dbReference>
<dbReference type="GenomeRNAi" id="91179"/>
<dbReference type="Pharos" id="Q96GP6">
    <property type="development level" value="Tbio"/>
</dbReference>
<dbReference type="PRO" id="PR:Q96GP6"/>
<dbReference type="Proteomes" id="UP000005640">
    <property type="component" value="Chromosome 22"/>
</dbReference>
<dbReference type="RNAct" id="Q96GP6">
    <property type="molecule type" value="protein"/>
</dbReference>
<dbReference type="Bgee" id="ENSG00000244486">
    <property type="expression patterns" value="Expressed in right coronary artery and 99 other cell types or tissues"/>
</dbReference>
<dbReference type="GO" id="GO:0005925">
    <property type="term" value="C:focal adhesion"/>
    <property type="evidence" value="ECO:0007005"/>
    <property type="project" value="UniProtKB"/>
</dbReference>
<dbReference type="GO" id="GO:0016020">
    <property type="term" value="C:membrane"/>
    <property type="evidence" value="ECO:0007669"/>
    <property type="project" value="UniProtKB-SubCell"/>
</dbReference>
<dbReference type="GO" id="GO:0005044">
    <property type="term" value="F:scavenger receptor activity"/>
    <property type="evidence" value="ECO:0000318"/>
    <property type="project" value="GO_Central"/>
</dbReference>
<dbReference type="GO" id="GO:0007157">
    <property type="term" value="P:heterophilic cell-cell adhesion via plasma membrane cell adhesion molecules"/>
    <property type="evidence" value="ECO:0000318"/>
    <property type="project" value="GO_Central"/>
</dbReference>
<dbReference type="FunFam" id="2.170.300.10:FF:000010">
    <property type="entry name" value="Scavenger receptor class F member 2"/>
    <property type="match status" value="1"/>
</dbReference>
<dbReference type="FunFam" id="2.170.300.10:FF:000013">
    <property type="entry name" value="Scavenger receptor class F, member 2"/>
    <property type="match status" value="1"/>
</dbReference>
<dbReference type="Gene3D" id="2.170.300.10">
    <property type="entry name" value="Tie2 ligand-binding domain superfamily"/>
    <property type="match status" value="3"/>
</dbReference>
<dbReference type="InterPro" id="IPR000742">
    <property type="entry name" value="EGF-like_dom"/>
</dbReference>
<dbReference type="InterPro" id="IPR009030">
    <property type="entry name" value="Growth_fac_rcpt_cys_sf"/>
</dbReference>
<dbReference type="InterPro" id="IPR002049">
    <property type="entry name" value="LE_dom"/>
</dbReference>
<dbReference type="InterPro" id="IPR042635">
    <property type="entry name" value="MEGF10/SREC1/2-like"/>
</dbReference>
<dbReference type="PANTHER" id="PTHR24043">
    <property type="entry name" value="SCAVENGER RECEPTOR CLASS F"/>
    <property type="match status" value="1"/>
</dbReference>
<dbReference type="PANTHER" id="PTHR24043:SF5">
    <property type="entry name" value="SCAVENGER RECEPTOR CLASS F MEMBER 2"/>
    <property type="match status" value="1"/>
</dbReference>
<dbReference type="PRINTS" id="PR00011">
    <property type="entry name" value="EGFLAMININ"/>
</dbReference>
<dbReference type="SMART" id="SM00181">
    <property type="entry name" value="EGF"/>
    <property type="match status" value="7"/>
</dbReference>
<dbReference type="SMART" id="SM00180">
    <property type="entry name" value="EGF_Lam"/>
    <property type="match status" value="6"/>
</dbReference>
<dbReference type="SUPFAM" id="SSF57184">
    <property type="entry name" value="Growth factor receptor domain"/>
    <property type="match status" value="1"/>
</dbReference>
<dbReference type="PROSITE" id="PS00022">
    <property type="entry name" value="EGF_1"/>
    <property type="match status" value="7"/>
</dbReference>
<dbReference type="PROSITE" id="PS01186">
    <property type="entry name" value="EGF_2"/>
    <property type="match status" value="4"/>
</dbReference>
<dbReference type="PROSITE" id="PS50026">
    <property type="entry name" value="EGF_3"/>
    <property type="match status" value="3"/>
</dbReference>
<keyword id="KW-0025">Alternative splicing</keyword>
<keyword id="KW-0130">Cell adhesion</keyword>
<keyword id="KW-0225">Disease variant</keyword>
<keyword id="KW-1015">Disulfide bond</keyword>
<keyword id="KW-0245">EGF-like domain</keyword>
<keyword id="KW-0325">Glycoprotein</keyword>
<keyword id="KW-0472">Membrane</keyword>
<keyword id="KW-0597">Phosphoprotein</keyword>
<keyword id="KW-1267">Proteomics identification</keyword>
<keyword id="KW-0675">Receptor</keyword>
<keyword id="KW-1185">Reference proteome</keyword>
<keyword id="KW-0677">Repeat</keyword>
<keyword id="KW-0732">Signal</keyword>
<keyword id="KW-0812">Transmembrane</keyword>
<keyword id="KW-1133">Transmembrane helix</keyword>
<sequence>MEGAGPRGAGPARRRGAGGPPSPLLPSLLLLLLLWMLPDTVAPQELNPRGRNVCRAPGSQVPTCCAGWRQQGDECGIAVCEGNSTCSENEVCVRPGECRCRHGYFGANCDTKCPRQFWGPDCKELCSCHPHGQCEDVTGQCTCHARRWGARCEHACQCQHGTCHPRSGACRCEPGWWGAQCASACYCSATSRCDPQTGACLCHAGWWGRSCNNQCACNSSPCEQQSGRCQCRERTFGARCDRYCQCFRGRCHPVDGTCACEPGYRGKYCREPCPAGFYGLGCRRRCGQCKGQQPCTVAEGRCLTCEPGWNGTKCDQPCATGFYGEGCSHRCPPCRDGHACNHVTGKCTRCNAGWIGDRCETKCSNGTYGEDCAFVCADCGSGHCDFQSGRCLCSPGVHGPHCNVTCPPGLHGADCAQACSCHEDTCDPVTGACHLETNQRKGVMGAGALLVLLVCLLLSLLGCCCACRGKDPTRRPRPRRELSLGRKKAPHRLCGRFSRISMKLPRIPLRRQKLPKVVVAHHDLDNTLNCSFLEPPSGLEQPSPSWSSRASFSSFDTTDEGPVYCVPHEEAPAESRDPEVPTVPAEAPAPSPVPLTTPASAEEAIPLPASSDSERSASSVEGPGGALYARVARREARPARARGEIGGLSLSPSPERRKPPPPDPATKPKVSWIHGKHSAAAAGRAPSPPPPGSEAAPSPSKRKRTPSDKSAHTVEHGSPRTRDPTPRPPGLPEEATALAAPSPPRARARGRGPGLLEPTDAGGPPRSAPEAASMLAAELRGKTRSLGRAEVALGAQGPREKPAPPQKAKRSVPPASPARAPPATETPGPEKAATDLPAPETPRKKTPIQKPPRKKSREAAGELGRAGAPTL</sequence>
<proteinExistence type="evidence at protein level"/>
<protein>
    <recommendedName>
        <fullName>Scavenger receptor class F member 2</fullName>
    </recommendedName>
    <alternativeName>
        <fullName>SRECRP-1</fullName>
    </alternativeName>
    <alternativeName>
        <fullName>Scavenger receptor expressed by endothelial cells 2 protein</fullName>
        <shortName>SREC-II</shortName>
    </alternativeName>
</protein>
<feature type="signal peptide" evidence="3">
    <location>
        <begin position="1"/>
        <end position="43"/>
    </location>
</feature>
<feature type="chain" id="PRO_0000007739" description="Scavenger receptor class F member 2">
    <location>
        <begin position="44"/>
        <end position="871"/>
    </location>
</feature>
<feature type="topological domain" description="Extracellular" evidence="3">
    <location>
        <begin position="44"/>
        <end position="441"/>
    </location>
</feature>
<feature type="transmembrane region" description="Helical" evidence="3">
    <location>
        <begin position="442"/>
        <end position="462"/>
    </location>
</feature>
<feature type="topological domain" description="Cytoplasmic" evidence="3">
    <location>
        <begin position="463"/>
        <end position="871"/>
    </location>
</feature>
<feature type="domain" description="EGF-like 1" evidence="4">
    <location>
        <begin position="71"/>
        <end position="110"/>
    </location>
</feature>
<feature type="domain" description="EGF-like 2" evidence="4">
    <location>
        <begin position="122"/>
        <end position="153"/>
    </location>
</feature>
<feature type="domain" description="EGF-like 3" evidence="4">
    <location>
        <begin position="148"/>
        <end position="182"/>
    </location>
</feature>
<feature type="domain" description="EGF-like 4" evidence="4">
    <location>
        <begin position="183"/>
        <end position="212"/>
    </location>
</feature>
<feature type="domain" description="EGF-like 5" evidence="4">
    <location>
        <begin position="213"/>
        <end position="241"/>
    </location>
</feature>
<feature type="domain" description="EGF-like 6" evidence="4">
    <location>
        <begin position="236"/>
        <end position="270"/>
    </location>
</feature>
<feature type="domain" description="EGF-like 7" evidence="4">
    <location>
        <begin position="372"/>
        <end position="403"/>
    </location>
</feature>
<feature type="region of interest" description="Disordered" evidence="5">
    <location>
        <begin position="1"/>
        <end position="20"/>
    </location>
</feature>
<feature type="region of interest" description="Disordered" evidence="5">
    <location>
        <begin position="570"/>
        <end position="871"/>
    </location>
</feature>
<feature type="compositionally biased region" description="Basic and acidic residues" evidence="5">
    <location>
        <begin position="570"/>
        <end position="579"/>
    </location>
</feature>
<feature type="compositionally biased region" description="Basic and acidic residues" evidence="5">
    <location>
        <begin position="632"/>
        <end position="643"/>
    </location>
</feature>
<feature type="compositionally biased region" description="Basic and acidic residues" evidence="5">
    <location>
        <begin position="705"/>
        <end position="725"/>
    </location>
</feature>
<feature type="compositionally biased region" description="Low complexity" evidence="5">
    <location>
        <begin position="821"/>
        <end position="831"/>
    </location>
</feature>
<feature type="compositionally biased region" description="Basic residues" evidence="5">
    <location>
        <begin position="844"/>
        <end position="856"/>
    </location>
</feature>
<feature type="compositionally biased region" description="Low complexity" evidence="5">
    <location>
        <begin position="861"/>
        <end position="871"/>
    </location>
</feature>
<feature type="modified residue" description="Phosphoserine" evidence="2">
    <location>
        <position position="551"/>
    </location>
</feature>
<feature type="modified residue" description="Phosphoserine" evidence="15">
    <location>
        <position position="613"/>
    </location>
</feature>
<feature type="modified residue" description="Phosphotyrosine" evidence="2">
    <location>
        <position position="628"/>
    </location>
</feature>
<feature type="modified residue" description="Phosphoserine" evidence="14">
    <location>
        <position position="651"/>
    </location>
</feature>
<feature type="modified residue" description="Phosphoserine" evidence="14 15">
    <location>
        <position position="653"/>
    </location>
</feature>
<feature type="modified residue" description="Phosphoserine" evidence="2">
    <location>
        <position position="710"/>
    </location>
</feature>
<feature type="modified residue" description="Phosphoserine" evidence="14">
    <location>
        <position position="718"/>
    </location>
</feature>
<feature type="modified residue" description="Phosphoserine" evidence="15">
    <location>
        <position position="742"/>
    </location>
</feature>
<feature type="glycosylation site" description="N-linked (GlcNAc...) asparagine" evidence="3">
    <location>
        <position position="83"/>
    </location>
</feature>
<feature type="glycosylation site" description="N-linked (GlcNAc...) asparagine" evidence="3">
    <location>
        <position position="310"/>
    </location>
</feature>
<feature type="glycosylation site" description="N-linked (GlcNAc...) asparagine" evidence="3">
    <location>
        <position position="365"/>
    </location>
</feature>
<feature type="glycosylation site" description="N-linked (GlcNAc...) asparagine" evidence="3">
    <location>
        <position position="403"/>
    </location>
</feature>
<feature type="disulfide bond" evidence="4">
    <location>
        <begin position="75"/>
        <end position="86"/>
    </location>
</feature>
<feature type="disulfide bond" evidence="4">
    <location>
        <begin position="80"/>
        <end position="98"/>
    </location>
</feature>
<feature type="disulfide bond" evidence="4">
    <location>
        <begin position="100"/>
        <end position="109"/>
    </location>
</feature>
<feature type="disulfide bond" evidence="4">
    <location>
        <begin position="126"/>
        <end position="134"/>
    </location>
</feature>
<feature type="disulfide bond" evidence="4">
    <location>
        <begin position="128"/>
        <end position="141"/>
    </location>
</feature>
<feature type="disulfide bond" evidence="4">
    <location>
        <begin position="143"/>
        <end position="152"/>
    </location>
</feature>
<feature type="disulfide bond" evidence="4">
    <location>
        <begin position="156"/>
        <end position="163"/>
    </location>
</feature>
<feature type="disulfide bond" evidence="4">
    <location>
        <begin position="158"/>
        <end position="170"/>
    </location>
</feature>
<feature type="disulfide bond" evidence="4">
    <location>
        <begin position="172"/>
        <end position="181"/>
    </location>
</feature>
<feature type="disulfide bond" evidence="4">
    <location>
        <begin position="185"/>
        <end position="193"/>
    </location>
</feature>
<feature type="disulfide bond" evidence="4">
    <location>
        <begin position="187"/>
        <end position="200"/>
    </location>
</feature>
<feature type="disulfide bond" evidence="4">
    <location>
        <begin position="202"/>
        <end position="211"/>
    </location>
</feature>
<feature type="disulfide bond" evidence="4">
    <location>
        <begin position="215"/>
        <end position="222"/>
    </location>
</feature>
<feature type="disulfide bond" evidence="4">
    <location>
        <begin position="217"/>
        <end position="229"/>
    </location>
</feature>
<feature type="disulfide bond" evidence="4">
    <location>
        <begin position="231"/>
        <end position="240"/>
    </location>
</feature>
<feature type="disulfide bond" evidence="4">
    <location>
        <begin position="244"/>
        <end position="251"/>
    </location>
</feature>
<feature type="disulfide bond" evidence="4">
    <location>
        <begin position="246"/>
        <end position="258"/>
    </location>
</feature>
<feature type="disulfide bond" evidence="4">
    <location>
        <begin position="260"/>
        <end position="269"/>
    </location>
</feature>
<feature type="disulfide bond" evidence="4">
    <location>
        <begin position="376"/>
        <end position="384"/>
    </location>
</feature>
<feature type="disulfide bond" evidence="4">
    <location>
        <begin position="379"/>
        <end position="391"/>
    </location>
</feature>
<feature type="disulfide bond" evidence="4">
    <location>
        <begin position="393"/>
        <end position="402"/>
    </location>
</feature>
<feature type="splice variant" id="VSP_042462" description="In isoform 2." evidence="10 11 12">
    <location>
        <begin position="474"/>
        <end position="478"/>
    </location>
</feature>
<feature type="sequence variant" id="VAR_059274" description="In dbSNP:rs361566." evidence="9">
    <original>P</original>
    <variation>S</variation>
    <location>
        <position position="174"/>
    </location>
</feature>
<feature type="sequence variant" id="VAR_065302" description="In VDEGS; dbSNP:rs387907086." evidence="8">
    <original>C</original>
    <variation>Y</variation>
    <location>
        <position position="258"/>
    </location>
</feature>
<feature type="sequence variant" id="VAR_055776" description="In dbSNP:rs2241230.">
    <original>T</original>
    <variation>S</variation>
    <location>
        <position position="425"/>
    </location>
</feature>
<feature type="sequence variant" id="VAR_035837" description="In a breast cancer sample; somatic mutation; dbSNP:rs2052613887." evidence="7">
    <original>R</original>
    <variation>C</variation>
    <location>
        <position position="499"/>
    </location>
</feature>
<feature type="sequence variant" id="VAR_055777" description="In dbSNP:rs12484828.">
    <original>H</original>
    <variation>L</variation>
    <location>
        <position position="522"/>
    </location>
</feature>
<feature type="sequence variant" id="VAR_015148" description="In dbSNP:rs759611." evidence="6">
    <original>E</original>
    <variation>D</variation>
    <location>
        <position position="778"/>
    </location>
</feature>
<feature type="sequence variant" id="VAR_015149" description="In dbSNP:rs759612." evidence="6">
    <original>L</original>
    <variation>V</variation>
    <location>
        <position position="779"/>
    </location>
</feature>
<feature type="sequence variant" id="VAR_015150" description="In dbSNP:rs874100.">
    <original>A</original>
    <variation>G</variation>
    <location>
        <position position="820"/>
    </location>
</feature>
<feature type="sequence variant" id="VAR_015151" description="In dbSNP:rs874101.">
    <original>A</original>
    <variation>G</variation>
    <location>
        <position position="838"/>
    </location>
</feature>
<feature type="sequence conflict" description="In Ref. 6; AAH00584." evidence="13" ref="6">
    <original>ARVARREARPARA</original>
    <variation>PTTTWITHSTAAS</variation>
    <location>
        <begin position="629"/>
        <end position="641"/>
    </location>
</feature>
<comment type="function">
    <text evidence="1">Probable adhesion protein, which mediates homophilic and heterophilic interactions. In contrast to SCARF1, it poorly mediates the binding and degradation of acetylated low density lipoprotein (Ac-LDL) (By similarity).</text>
</comment>
<comment type="subunit">
    <text evidence="1">Homophilic and heterophilic interaction via its extracellular domain. Interacts with SCARF1. The heterophilic interaction with SCARF1, which is stronger than the homophilic interaction with itself, is suppressed by the presence of SCARF1 ligand such as Ac-LDL (By similarity).</text>
</comment>
<comment type="interaction">
    <interactant intactId="EBI-1752088">
        <id>Q96GP6</id>
    </interactant>
    <interactant intactId="EBI-389883">
        <id>P16333</id>
        <label>NCK1</label>
    </interactant>
    <organismsDiffer>false</organismsDiffer>
    <experiments>2</experiments>
</comment>
<comment type="subcellular location">
    <subcellularLocation>
        <location evidence="13">Membrane</location>
        <topology evidence="13">Single-pass type I membrane protein</topology>
    </subcellularLocation>
</comment>
<comment type="alternative products">
    <event type="alternative splicing"/>
    <isoform>
        <id>Q96GP6-1</id>
        <name>1</name>
        <sequence type="displayed"/>
    </isoform>
    <isoform>
        <id>Q96GP6-2</id>
        <name>2</name>
        <sequence type="described" ref="VSP_042462"/>
    </isoform>
</comment>
<comment type="tissue specificity">
    <text evidence="6">Predominantly expressed in endothelial cells. Expressed in heart, placenta, lung, kidney, spleen, small intestine and ovary.</text>
</comment>
<comment type="disease" evidence="8">
    <disease id="DI-03057">
        <name>Van den Ende-Gupta syndrome</name>
        <acronym>VDEGS</acronym>
        <description>A syndrome characterized by craniofacial and skeletal abnormalities that include blepharophimosis, a flat and wide nasal bridge, narrow and beaked nose, hypoplastic maxilla with or without cleft palate and everted lower lip, prominent ears, down-slanting eyes, arachnodactyly, and camptodactyly. Patients present congenital joint contractures that improve without intervention, and normal growth and development. Intelligence is normal. Rarely, enlarged cerebella can be present. Some patients experience respiratory problems due to laryngeal abnormalities.</description>
        <dbReference type="MIM" id="600920"/>
    </disease>
    <text>The disease is caused by variants affecting the gene represented in this entry.</text>
</comment>
<comment type="sequence caution" evidence="13">
    <conflict type="frameshift">
        <sequence resource="EMBL-CDS" id="AAN45861"/>
    </conflict>
</comment>